<proteinExistence type="evidence at protein level"/>
<name>NFYA2_CAEEL</name>
<reference evidence="7" key="1">
    <citation type="journal article" date="1998" name="Science">
        <title>Genome sequence of the nematode C. elegans: a platform for investigating biology.</title>
        <authorList>
            <consortium name="The C. elegans sequencing consortium"/>
        </authorList>
    </citation>
    <scope>NUCLEOTIDE SEQUENCE [LARGE SCALE GENOMIC DNA]</scope>
    <source>
        <strain evidence="7">Bristol N2</strain>
    </source>
</reference>
<reference evidence="6" key="2">
    <citation type="journal article" date="2005" name="J. Mol. Histol.">
        <title>Expression of the CCAAT-binding factor NF-Y in Caenorhabditis elegans.</title>
        <authorList>
            <person name="Franchini A."/>
            <person name="Imbriano C."/>
            <person name="Peruzzi E."/>
            <person name="Mantovani R."/>
            <person name="Ottaviani E."/>
        </authorList>
    </citation>
    <scope>TISSUE SPECIFICITY</scope>
</reference>
<reference evidence="6" key="3">
    <citation type="journal article" date="2007" name="Dev. Biol.">
        <title>Transcription factor NFY globally represses the expression of the C. elegans Hox gene Abdominal-B homolog egl-5.</title>
        <authorList>
            <person name="Deng H."/>
            <person name="Sun Y."/>
            <person name="Zhang Y."/>
            <person name="Luo X."/>
            <person name="Hou W."/>
            <person name="Yan L."/>
            <person name="Chen Y."/>
            <person name="Tian E."/>
            <person name="Han J."/>
            <person name="Zhang H."/>
        </authorList>
    </citation>
    <scope>FUNCTION</scope>
    <scope>IDENTIFICATION IN NF-Y COMPLEX</scope>
    <scope>INTERACTION WITH NFYB-1 AND NFYC-2</scope>
    <scope>SUBCELLULAR LOCATION</scope>
    <scope>TISSUE SPECIFICITY</scope>
    <scope>DEVELOPMENTAL STAGE</scope>
</reference>
<reference evidence="6" key="4">
    <citation type="journal article" date="2013" name="Dev. Biol.">
        <title>The NF-Y complex negatively regulates Caenorhabditis elegans tbx-2 expression.</title>
        <authorList>
            <person name="Milton A.C."/>
            <person name="Packard A.V."/>
            <person name="Clary L."/>
            <person name="Okkema P.G."/>
        </authorList>
    </citation>
    <scope>FUNCTION</scope>
    <scope>DISRUPTION PHENOTYPE</scope>
</reference>
<comment type="function">
    <text evidence="4 5">Component of the sequence-specific heterotrimeric transcription factor (nfya-2-NF-Y) which specifically recognizes a 5'-CCAAT-3' box motif found in the promoters of its target genes to regulate their expression and control cellular identity in particular tissue types (PubMed:17574230). In association with the components in the nfya-2-NF-Y complex, may repress the expression of the T-box transcription factor tbx-2 throughout larval development, which most likely restricts its expression to certain tissues (PubMed:23933492).</text>
</comment>
<comment type="subunit">
    <text evidence="4">Forms a heterotrimeric transcription factor complex (nfya-2-NF-Y complex) composed of nfya-2, nfyb-1 and nfyc-1 (PubMed:17574230). Interacts with the nfyb-1 and nfyc-1 dimer; the interaction is required for subsequent binding to the 5'-CCAAT-3' box motif in DNA (PubMed:17574230). Does not interact with either nfyb-1 or nfyc-1 in their monomeric form (PubMed:17574230).</text>
</comment>
<comment type="subcellular location">
    <subcellularLocation>
        <location evidence="4">Nucleus</location>
    </subcellularLocation>
</comment>
<comment type="alternative products">
    <event type="alternative splicing"/>
    <isoform>
        <id>Q5ZEP9-1</id>
        <name evidence="8">a</name>
        <sequence type="displayed"/>
    </isoform>
    <isoform>
        <id>Q5ZEP9-2</id>
        <name evidence="9">b</name>
        <sequence type="described" ref="VSP_060605"/>
    </isoform>
    <isoform>
        <id>Q5ZEP9-3</id>
        <name evidence="10">c</name>
        <sequence type="described" ref="VSP_060604"/>
    </isoform>
</comment>
<comment type="tissue specificity">
    <text evidence="3 4">Highly expressed in certain parts of the gonads (PubMed:15704008). Expressed in the spermatheca, intestine and in some neurons in the head (PubMed:17574230). Not expressed in the intestine, the hypodermis, body wall muscle surrounding the pseudocoelomic space, secretory cells in the pharyngeal terminal bulb wall, in the small ganglia surrounding the pharynx and in the neurons running anteriorly to the sensory organs in the head (PubMed:15704008).</text>
</comment>
<comment type="developmental stage">
    <text evidence="4">Expressed at all developmental stages (PubMed:17574230). Highly expressed in the intestine at all developmental stages (PubMed:17574230).</text>
</comment>
<comment type="disruption phenotype">
    <text evidence="5">RNAi-mediated knockdown results in weak ectopic expression of tbx-2 in seam cells of the head in young adults.</text>
</comment>
<comment type="similarity">
    <text evidence="1">Belongs to the NFYA/HAP2 subunit family.</text>
</comment>
<protein>
    <recommendedName>
        <fullName evidence="6">Nuclear transcription factor Y subunit nfya-2</fullName>
    </recommendedName>
    <alternativeName>
        <fullName evidence="6">CAAT box DNA-binding protein subunit nfya-2</fullName>
    </alternativeName>
</protein>
<feature type="chain" id="PRO_0000450333" description="Nuclear transcription factor Y subunit nfya-2">
    <location>
        <begin position="1"/>
        <end position="281"/>
    </location>
</feature>
<feature type="DNA-binding region" description="NFYA/HAP2-type" evidence="1">
    <location>
        <begin position="180"/>
        <end position="204"/>
    </location>
</feature>
<feature type="region of interest" description="Disordered" evidence="2">
    <location>
        <begin position="1"/>
        <end position="27"/>
    </location>
</feature>
<feature type="region of interest" description="Disordered" evidence="2">
    <location>
        <begin position="163"/>
        <end position="261"/>
    </location>
</feature>
<feature type="short sequence motif" description="Subunit association domain (SAD)" evidence="1">
    <location>
        <begin position="150"/>
        <end position="173"/>
    </location>
</feature>
<feature type="compositionally biased region" description="Basic and acidic residues" evidence="2">
    <location>
        <begin position="166"/>
        <end position="188"/>
    </location>
</feature>
<feature type="compositionally biased region" description="Basic residues" evidence="2">
    <location>
        <begin position="189"/>
        <end position="198"/>
    </location>
</feature>
<feature type="compositionally biased region" description="Low complexity" evidence="2">
    <location>
        <begin position="204"/>
        <end position="220"/>
    </location>
</feature>
<feature type="splice variant" id="VSP_060604" description="In isoform c." evidence="6">
    <location>
        <begin position="1"/>
        <end position="149"/>
    </location>
</feature>
<feature type="splice variant" id="VSP_060605" description="In isoform b." evidence="6">
    <location>
        <begin position="1"/>
        <end position="9"/>
    </location>
</feature>
<dbReference type="EMBL" id="BX284601">
    <property type="protein sequence ID" value="CAH60767.2"/>
    <property type="molecule type" value="Genomic_DNA"/>
</dbReference>
<dbReference type="EMBL" id="BX284601">
    <property type="protein sequence ID" value="CCA65672.1"/>
    <property type="molecule type" value="Genomic_DNA"/>
</dbReference>
<dbReference type="EMBL" id="BX284601">
    <property type="protein sequence ID" value="CCA65673.1"/>
    <property type="molecule type" value="Genomic_DNA"/>
</dbReference>
<dbReference type="RefSeq" id="NP_001251586.1">
    <molecule id="Q5ZEP9-1"/>
    <property type="nucleotide sequence ID" value="NM_001264657.2"/>
</dbReference>
<dbReference type="RefSeq" id="NP_001251587.1">
    <molecule id="Q5ZEP9-2"/>
    <property type="nucleotide sequence ID" value="NM_001264658.3"/>
</dbReference>
<dbReference type="RefSeq" id="NP_001251588.1">
    <molecule id="Q5ZEP9-3"/>
    <property type="nucleotide sequence ID" value="NM_001264659.3"/>
</dbReference>
<dbReference type="SMR" id="Q5ZEP9"/>
<dbReference type="ComplexPortal" id="CPX-5667">
    <property type="entry name" value="CCAAT-binding factor complex, nfya-2 variant"/>
</dbReference>
<dbReference type="FunCoup" id="Q5ZEP9">
    <property type="interactions" value="69"/>
</dbReference>
<dbReference type="STRING" id="6239.Y53H1A.5a.1"/>
<dbReference type="PaxDb" id="6239-Y53H1A.5a"/>
<dbReference type="EnsemblMetazoa" id="Y53H1A.5a.1">
    <molecule id="Q5ZEP9-1"/>
    <property type="protein sequence ID" value="Y53H1A.5a.1"/>
    <property type="gene ID" value="WBGene00043056"/>
</dbReference>
<dbReference type="EnsemblMetazoa" id="Y53H1A.5b.1">
    <molecule id="Q5ZEP9-2"/>
    <property type="protein sequence ID" value="Y53H1A.5b.1"/>
    <property type="gene ID" value="WBGene00043056"/>
</dbReference>
<dbReference type="EnsemblMetazoa" id="Y53H1A.5c.1">
    <molecule id="Q5ZEP9-3"/>
    <property type="protein sequence ID" value="Y53H1A.5c.1"/>
    <property type="gene ID" value="WBGene00043056"/>
</dbReference>
<dbReference type="GeneID" id="3565955"/>
<dbReference type="KEGG" id="cel:CELE_Y53H1A.5"/>
<dbReference type="UCSC" id="Y53H1A.5">
    <molecule id="Q5ZEP9-1"/>
    <property type="organism name" value="c. elegans"/>
</dbReference>
<dbReference type="AGR" id="WB:WBGene00043056"/>
<dbReference type="CTD" id="3565955"/>
<dbReference type="WormBase" id="Y53H1A.5a">
    <molecule id="Q5ZEP9-1"/>
    <property type="protein sequence ID" value="CE41285"/>
    <property type="gene ID" value="WBGene00043056"/>
    <property type="gene designation" value="nfya-2"/>
</dbReference>
<dbReference type="WormBase" id="Y53H1A.5b">
    <molecule id="Q5ZEP9-2"/>
    <property type="protein sequence ID" value="CE37572"/>
    <property type="gene ID" value="WBGene00043056"/>
    <property type="gene designation" value="nfya-2"/>
</dbReference>
<dbReference type="WormBase" id="Y53H1A.5c">
    <molecule id="Q5ZEP9-3"/>
    <property type="protein sequence ID" value="CE46100"/>
    <property type="gene ID" value="WBGene00043056"/>
    <property type="gene designation" value="nfya-2"/>
</dbReference>
<dbReference type="eggNOG" id="KOG1561">
    <property type="taxonomic scope" value="Eukaryota"/>
</dbReference>
<dbReference type="GeneTree" id="ENSGT00390000015714"/>
<dbReference type="HOGENOM" id="CLU_991207_0_0_1"/>
<dbReference type="InParanoid" id="Q5ZEP9"/>
<dbReference type="OrthoDB" id="1097733at2759"/>
<dbReference type="PRO" id="PR:Q5ZEP9"/>
<dbReference type="Proteomes" id="UP000001940">
    <property type="component" value="Chromosome I"/>
</dbReference>
<dbReference type="Bgee" id="WBGene00043056">
    <property type="expression patterns" value="Expressed in pharyngeal muscle cell (C elegans) and 11 other cell types or tissues"/>
</dbReference>
<dbReference type="ExpressionAtlas" id="Q5ZEP9">
    <property type="expression patterns" value="baseline and differential"/>
</dbReference>
<dbReference type="GO" id="GO:0016602">
    <property type="term" value="C:CCAAT-binding factor complex"/>
    <property type="evidence" value="ECO:0000353"/>
    <property type="project" value="ComplexPortal"/>
</dbReference>
<dbReference type="GO" id="GO:0005634">
    <property type="term" value="C:nucleus"/>
    <property type="evidence" value="ECO:0000314"/>
    <property type="project" value="UniProtKB"/>
</dbReference>
<dbReference type="GO" id="GO:0003677">
    <property type="term" value="F:DNA binding"/>
    <property type="evidence" value="ECO:0007669"/>
    <property type="project" value="UniProtKB-KW"/>
</dbReference>
<dbReference type="GO" id="GO:0000981">
    <property type="term" value="F:DNA-binding transcription factor activity, RNA polymerase II-specific"/>
    <property type="evidence" value="ECO:0000318"/>
    <property type="project" value="GO_Central"/>
</dbReference>
<dbReference type="GO" id="GO:0001217">
    <property type="term" value="F:DNA-binding transcription repressor activity"/>
    <property type="evidence" value="ECO:0000315"/>
    <property type="project" value="UniProtKB"/>
</dbReference>
<dbReference type="GO" id="GO:0010468">
    <property type="term" value="P:regulation of gene expression"/>
    <property type="evidence" value="ECO:0000303"/>
    <property type="project" value="ComplexPortal"/>
</dbReference>
<dbReference type="GO" id="GO:0006357">
    <property type="term" value="P:regulation of transcription by RNA polymerase II"/>
    <property type="evidence" value="ECO:0000318"/>
    <property type="project" value="GO_Central"/>
</dbReference>
<dbReference type="GO" id="GO:0009888">
    <property type="term" value="P:tissue development"/>
    <property type="evidence" value="ECO:0000315"/>
    <property type="project" value="UniProtKB"/>
</dbReference>
<dbReference type="Gene3D" id="6.10.250.2430">
    <property type="match status" value="1"/>
</dbReference>
<dbReference type="InterPro" id="IPR001289">
    <property type="entry name" value="NFYA"/>
</dbReference>
<dbReference type="PANTHER" id="PTHR12632">
    <property type="entry name" value="TRANSCRIPTION FACTOR NF-Y ALPHA-RELATED"/>
    <property type="match status" value="1"/>
</dbReference>
<dbReference type="Pfam" id="PF02045">
    <property type="entry name" value="CBFB_NFYA"/>
    <property type="match status" value="1"/>
</dbReference>
<dbReference type="PRINTS" id="PR00616">
    <property type="entry name" value="CCAATSUBUNTB"/>
</dbReference>
<dbReference type="SMART" id="SM00521">
    <property type="entry name" value="CBF"/>
    <property type="match status" value="1"/>
</dbReference>
<dbReference type="PROSITE" id="PS51152">
    <property type="entry name" value="NFYA_HAP2_2"/>
    <property type="match status" value="1"/>
</dbReference>
<sequence>MNPRGNPSKMPTQIVLNRRPAAPARPQTTFTSLSQYHMYNTASTSSAPPPPPNQNFGQIREAIRTTQPTTVQLPPDCKLVEYTWQENGESRTVLIPMSNDSTEDDVRSALPQSVLESINQHQNQLRQGNAQAVHYYQKHQNPISHEKPIMVNPRQYKRIIKRREMRQKMEDSGRLPLERQKYMHESRRQHALKRRRTGGRFDANAEAAAASSEPSISSAAPSPPKAPRAPTTYAMIRPATSHPPVNIPKAPAMTYRPVQEEKKSIERISKAQMFTIPKRQQ</sequence>
<evidence type="ECO:0000255" key="1">
    <source>
        <dbReference type="PROSITE-ProRule" id="PRU00966"/>
    </source>
</evidence>
<evidence type="ECO:0000256" key="2">
    <source>
        <dbReference type="SAM" id="MobiDB-lite"/>
    </source>
</evidence>
<evidence type="ECO:0000269" key="3">
    <source>
    </source>
</evidence>
<evidence type="ECO:0000269" key="4">
    <source>
    </source>
</evidence>
<evidence type="ECO:0000269" key="5">
    <source>
    </source>
</evidence>
<evidence type="ECO:0000305" key="6"/>
<evidence type="ECO:0000312" key="7">
    <source>
        <dbReference type="Proteomes" id="UP000001940"/>
    </source>
</evidence>
<evidence type="ECO:0000312" key="8">
    <source>
        <dbReference type="WormBase" id="Y53H1A.5a"/>
    </source>
</evidence>
<evidence type="ECO:0000312" key="9">
    <source>
        <dbReference type="WormBase" id="Y53H1A.5b"/>
    </source>
</evidence>
<evidence type="ECO:0000312" key="10">
    <source>
        <dbReference type="WormBase" id="Y53H1A.5c"/>
    </source>
</evidence>
<accession>Q5ZEP9</accession>
<accession>F3Y5S2</accession>
<accession>F3Y5S3</accession>
<keyword id="KW-0025">Alternative splicing</keyword>
<keyword id="KW-0238">DNA-binding</keyword>
<keyword id="KW-0539">Nucleus</keyword>
<keyword id="KW-1185">Reference proteome</keyword>
<keyword id="KW-0678">Repressor</keyword>
<keyword id="KW-0804">Transcription</keyword>
<keyword id="KW-0805">Transcription regulation</keyword>
<organism evidence="7">
    <name type="scientific">Caenorhabditis elegans</name>
    <dbReference type="NCBI Taxonomy" id="6239"/>
    <lineage>
        <taxon>Eukaryota</taxon>
        <taxon>Metazoa</taxon>
        <taxon>Ecdysozoa</taxon>
        <taxon>Nematoda</taxon>
        <taxon>Chromadorea</taxon>
        <taxon>Rhabditida</taxon>
        <taxon>Rhabditina</taxon>
        <taxon>Rhabditomorpha</taxon>
        <taxon>Rhabditoidea</taxon>
        <taxon>Rhabditidae</taxon>
        <taxon>Peloderinae</taxon>
        <taxon>Caenorhabditis</taxon>
    </lineage>
</organism>
<gene>
    <name evidence="8" type="primary">nfya-2</name>
    <name evidence="8" type="ORF">Y53H1A.5</name>
</gene>